<name>GUAA_ASPFU</name>
<accession>Q4WFT3</accession>
<comment type="function">
    <text evidence="5">Catalyzes the conversion of xanthine monophosphate (XMP) to GMP in the presence of glutamine and ATP through an adenyl-XMP intermediate.</text>
</comment>
<comment type="catalytic activity">
    <reaction evidence="5">
        <text>XMP + L-glutamine + ATP + H2O = GMP + L-glutamate + AMP + diphosphate + 2 H(+)</text>
        <dbReference type="Rhea" id="RHEA:11680"/>
        <dbReference type="ChEBI" id="CHEBI:15377"/>
        <dbReference type="ChEBI" id="CHEBI:15378"/>
        <dbReference type="ChEBI" id="CHEBI:29985"/>
        <dbReference type="ChEBI" id="CHEBI:30616"/>
        <dbReference type="ChEBI" id="CHEBI:33019"/>
        <dbReference type="ChEBI" id="CHEBI:57464"/>
        <dbReference type="ChEBI" id="CHEBI:58115"/>
        <dbReference type="ChEBI" id="CHEBI:58359"/>
        <dbReference type="ChEBI" id="CHEBI:456215"/>
        <dbReference type="EC" id="6.3.5.2"/>
    </reaction>
</comment>
<comment type="cofactor">
    <cofactor evidence="6">
        <name>Mg(2+)</name>
        <dbReference type="ChEBI" id="CHEBI:18420"/>
    </cofactor>
</comment>
<comment type="activity regulation">
    <text evidence="5">Inhibited by 6-diazo-5-oxo-l-norleucine (DON) and acivicin (ACI).</text>
</comment>
<comment type="biophysicochemical properties">
    <kinetics>
        <KM evidence="5">245 uM for ATP (at pH 7.5 and at 40 degrees Celsius)</KM>
        <KM evidence="5">1230 uM for magnesium (at pH 7.5 and at 40 degrees Celsius)</KM>
        <KM evidence="5">2693 uM for glutamine (at pH 7.5 and at 40 degrees Celsius)</KM>
        <text evidence="5">kcat is 1657 sec(-1) for ATP (at pH 7.5 and at 40 degrees Celsius).</text>
    </kinetics>
</comment>
<comment type="pathway">
    <text evidence="5">Purine metabolism; GMP biosynthesis; GMP from XMP (L-Gln route): step 1/1.</text>
</comment>
<comment type="subunit">
    <text evidence="5">Homodimer.</text>
</comment>
<comment type="subcellular location">
    <subcellularLocation>
        <location evidence="2">Cytoplasm</location>
        <location evidence="2">Cytosol</location>
    </subcellularLocation>
</comment>
<proteinExistence type="evidence at protein level"/>
<sequence length="557" mass="61432">MAEEQNPSATFDTILTLDFGSQYTHLITRRLREIGVYSEMLPCTQKLADLPFKPKGIILSGGPYSVYEDGAPHADPAVFELGVPVLGICYGLQEIAYRLGKDNVVAGTAREYGHADLNAQRLDNQGHVDKLFAGLEEHVKVWMSHGDKLVKLPEGFHTIATTANSEYAGIAHETKPVYGIQFHPEVTHTPDGAKLLRNFAVDICGANPNWTMSKFVDQEILRIRKLVGETDHVLGAVSGGVDSTVAAKLMKEAIGDRFHAVLVNNGCMRLNECETVAETLNKHLGINLTVVDASKRFLDGLKGVTDPEKKRMFIGATFIDVFEEEAEKIEALAENSGAKVKWFLQGTLYPDVIESISFKGPSATIKTHHNVGALPKRMIEGQGMKLIEPLRELFKDEVRQLGRELGIAHELVMRHPFPGPGIAIRVLGEVTPERVDIARKADHIFISMIREAGLYDKISQAYAALDPSKAVGVMGDKRVYAEIIILRAVETTDCKLTLGIDGDFVLRYIISVMTARAFPFDNEFLSKCATRIINEVHGVSRVLYDISSKPPATIEME</sequence>
<dbReference type="EC" id="6.3.5.2" evidence="5"/>
<dbReference type="EMBL" id="AAHF01000010">
    <property type="protein sequence ID" value="EAL86394.1"/>
    <property type="molecule type" value="Genomic_DNA"/>
</dbReference>
<dbReference type="RefSeq" id="XP_748432.1">
    <property type="nucleotide sequence ID" value="XM_743339.1"/>
</dbReference>
<dbReference type="PDB" id="7MO6">
    <property type="method" value="X-ray"/>
    <property type="resolution" value="2.30 A"/>
    <property type="chains" value="A/B=1-557"/>
</dbReference>
<dbReference type="PDBsum" id="7MO6"/>
<dbReference type="SMR" id="Q4WFT3"/>
<dbReference type="FunCoup" id="Q4WFT3">
    <property type="interactions" value="1064"/>
</dbReference>
<dbReference type="STRING" id="330879.Q4WFT3"/>
<dbReference type="MEROPS" id="C26.957"/>
<dbReference type="EnsemblFungi" id="EAL86394">
    <property type="protein sequence ID" value="EAL86394"/>
    <property type="gene ID" value="AFUA_3G01110"/>
</dbReference>
<dbReference type="GeneID" id="3505905"/>
<dbReference type="KEGG" id="afm:AFUA_3G01110"/>
<dbReference type="eggNOG" id="KOG1622">
    <property type="taxonomic scope" value="Eukaryota"/>
</dbReference>
<dbReference type="HOGENOM" id="CLU_014340_0_5_1"/>
<dbReference type="InParanoid" id="Q4WFT3"/>
<dbReference type="OMA" id="IWQSFAV"/>
<dbReference type="OrthoDB" id="1724632at2759"/>
<dbReference type="UniPathway" id="UPA00189">
    <property type="reaction ID" value="UER00296"/>
</dbReference>
<dbReference type="Proteomes" id="UP000002530">
    <property type="component" value="Chromosome 3"/>
</dbReference>
<dbReference type="GO" id="GO:0005829">
    <property type="term" value="C:cytosol"/>
    <property type="evidence" value="ECO:0000318"/>
    <property type="project" value="GO_Central"/>
</dbReference>
<dbReference type="GO" id="GO:0005524">
    <property type="term" value="F:ATP binding"/>
    <property type="evidence" value="ECO:0007669"/>
    <property type="project" value="UniProtKB-KW"/>
</dbReference>
<dbReference type="GO" id="GO:0003922">
    <property type="term" value="F:GMP synthase (glutamine-hydrolyzing) activity"/>
    <property type="evidence" value="ECO:0000314"/>
    <property type="project" value="UniProtKB"/>
</dbReference>
<dbReference type="GO" id="GO:0003921">
    <property type="term" value="F:GMP synthase activity"/>
    <property type="evidence" value="ECO:0000318"/>
    <property type="project" value="GO_Central"/>
</dbReference>
<dbReference type="GO" id="GO:0006177">
    <property type="term" value="P:GMP biosynthetic process"/>
    <property type="evidence" value="ECO:0000314"/>
    <property type="project" value="UniProtKB"/>
</dbReference>
<dbReference type="CDD" id="cd01742">
    <property type="entry name" value="GATase1_GMP_Synthase"/>
    <property type="match status" value="1"/>
</dbReference>
<dbReference type="CDD" id="cd01997">
    <property type="entry name" value="GMP_synthase_C"/>
    <property type="match status" value="1"/>
</dbReference>
<dbReference type="FunFam" id="3.30.300.10:FF:000002">
    <property type="entry name" value="GMP synthase [glutamine-hydrolyzing]"/>
    <property type="match status" value="1"/>
</dbReference>
<dbReference type="FunFam" id="3.40.50.620:FF:000001">
    <property type="entry name" value="GMP synthase [glutamine-hydrolyzing]"/>
    <property type="match status" value="1"/>
</dbReference>
<dbReference type="FunFam" id="3.40.50.880:FF:000001">
    <property type="entry name" value="GMP synthase [glutamine-hydrolyzing]"/>
    <property type="match status" value="1"/>
</dbReference>
<dbReference type="Gene3D" id="3.30.300.10">
    <property type="match status" value="1"/>
</dbReference>
<dbReference type="Gene3D" id="3.40.50.880">
    <property type="match status" value="1"/>
</dbReference>
<dbReference type="Gene3D" id="3.40.50.620">
    <property type="entry name" value="HUPs"/>
    <property type="match status" value="1"/>
</dbReference>
<dbReference type="HAMAP" id="MF_00344">
    <property type="entry name" value="GMP_synthase"/>
    <property type="match status" value="1"/>
</dbReference>
<dbReference type="InterPro" id="IPR029062">
    <property type="entry name" value="Class_I_gatase-like"/>
</dbReference>
<dbReference type="InterPro" id="IPR017926">
    <property type="entry name" value="GATASE"/>
</dbReference>
<dbReference type="InterPro" id="IPR001674">
    <property type="entry name" value="GMP_synth_C"/>
</dbReference>
<dbReference type="InterPro" id="IPR004739">
    <property type="entry name" value="GMP_synth_GATase"/>
</dbReference>
<dbReference type="InterPro" id="IPR022955">
    <property type="entry name" value="GMP_synthase"/>
</dbReference>
<dbReference type="InterPro" id="IPR025777">
    <property type="entry name" value="GMPS_ATP_PPase_dom"/>
</dbReference>
<dbReference type="InterPro" id="IPR022310">
    <property type="entry name" value="NAD/GMP_synthase"/>
</dbReference>
<dbReference type="InterPro" id="IPR014729">
    <property type="entry name" value="Rossmann-like_a/b/a_fold"/>
</dbReference>
<dbReference type="NCBIfam" id="TIGR00884">
    <property type="entry name" value="guaA_Cterm"/>
    <property type="match status" value="1"/>
</dbReference>
<dbReference type="NCBIfam" id="TIGR00888">
    <property type="entry name" value="guaA_Nterm"/>
    <property type="match status" value="1"/>
</dbReference>
<dbReference type="NCBIfam" id="NF000848">
    <property type="entry name" value="PRK00074.1"/>
    <property type="match status" value="1"/>
</dbReference>
<dbReference type="PANTHER" id="PTHR11922:SF2">
    <property type="entry name" value="GMP SYNTHASE [GLUTAMINE-HYDROLYZING]"/>
    <property type="match status" value="1"/>
</dbReference>
<dbReference type="PANTHER" id="PTHR11922">
    <property type="entry name" value="GMP SYNTHASE-RELATED"/>
    <property type="match status" value="1"/>
</dbReference>
<dbReference type="Pfam" id="PF00117">
    <property type="entry name" value="GATase"/>
    <property type="match status" value="1"/>
</dbReference>
<dbReference type="Pfam" id="PF00958">
    <property type="entry name" value="GMP_synt_C"/>
    <property type="match status" value="2"/>
</dbReference>
<dbReference type="Pfam" id="PF02540">
    <property type="entry name" value="NAD_synthase"/>
    <property type="match status" value="1"/>
</dbReference>
<dbReference type="PRINTS" id="PR00097">
    <property type="entry name" value="ANTSNTHASEII"/>
</dbReference>
<dbReference type="PRINTS" id="PR00096">
    <property type="entry name" value="GATASE"/>
</dbReference>
<dbReference type="SUPFAM" id="SSF52402">
    <property type="entry name" value="Adenine nucleotide alpha hydrolases-like"/>
    <property type="match status" value="1"/>
</dbReference>
<dbReference type="SUPFAM" id="SSF52317">
    <property type="entry name" value="Class I glutamine amidotransferase-like"/>
    <property type="match status" value="1"/>
</dbReference>
<dbReference type="SUPFAM" id="SSF54810">
    <property type="entry name" value="GMP synthetase C-terminal dimerisation domain"/>
    <property type="match status" value="1"/>
</dbReference>
<dbReference type="PROSITE" id="PS51273">
    <property type="entry name" value="GATASE_TYPE_1"/>
    <property type="match status" value="1"/>
</dbReference>
<dbReference type="PROSITE" id="PS51553">
    <property type="entry name" value="GMPS_ATP_PPASE"/>
    <property type="match status" value="1"/>
</dbReference>
<evidence type="ECO:0000250" key="1">
    <source>
        <dbReference type="UniProtKB" id="P49915"/>
    </source>
</evidence>
<evidence type="ECO:0000250" key="2">
    <source>
        <dbReference type="UniProtKB" id="Q9P772"/>
    </source>
</evidence>
<evidence type="ECO:0000255" key="3">
    <source>
        <dbReference type="PROSITE-ProRule" id="PRU00605"/>
    </source>
</evidence>
<evidence type="ECO:0000255" key="4">
    <source>
        <dbReference type="PROSITE-ProRule" id="PRU00886"/>
    </source>
</evidence>
<evidence type="ECO:0000269" key="5">
    <source>
    </source>
</evidence>
<evidence type="ECO:0000305" key="6">
    <source>
    </source>
</evidence>
<evidence type="ECO:0007744" key="7">
    <source>
        <dbReference type="PDB" id="7MO6"/>
    </source>
</evidence>
<evidence type="ECO:0007829" key="8">
    <source>
        <dbReference type="PDB" id="7MO6"/>
    </source>
</evidence>
<organism>
    <name type="scientific">Aspergillus fumigatus (strain ATCC MYA-4609 / CBS 101355 / FGSC A1100 / Af293)</name>
    <name type="common">Neosartorya fumigata</name>
    <dbReference type="NCBI Taxonomy" id="330879"/>
    <lineage>
        <taxon>Eukaryota</taxon>
        <taxon>Fungi</taxon>
        <taxon>Dikarya</taxon>
        <taxon>Ascomycota</taxon>
        <taxon>Pezizomycotina</taxon>
        <taxon>Eurotiomycetes</taxon>
        <taxon>Eurotiomycetidae</taxon>
        <taxon>Eurotiales</taxon>
        <taxon>Aspergillaceae</taxon>
        <taxon>Aspergillus</taxon>
        <taxon>Aspergillus subgen. Fumigati</taxon>
    </lineage>
</organism>
<protein>
    <recommendedName>
        <fullName>GMP synthase [glutamine-hydrolyzing]</fullName>
        <ecNumber evidence="5">6.3.5.2</ecNumber>
    </recommendedName>
    <alternativeName>
        <fullName>GMP synthetase</fullName>
    </alternativeName>
    <alternativeName>
        <fullName>Glutamine amidotransferase</fullName>
    </alternativeName>
</protein>
<gene>
    <name type="primary">gua1</name>
    <name type="ORF">AFUA_3G01110</name>
</gene>
<reference key="1">
    <citation type="journal article" date="2005" name="Nature">
        <title>Genomic sequence of the pathogenic and allergenic filamentous fungus Aspergillus fumigatus.</title>
        <authorList>
            <person name="Nierman W.C."/>
            <person name="Pain A."/>
            <person name="Anderson M.J."/>
            <person name="Wortman J.R."/>
            <person name="Kim H.S."/>
            <person name="Arroyo J."/>
            <person name="Berriman M."/>
            <person name="Abe K."/>
            <person name="Archer D.B."/>
            <person name="Bermejo C."/>
            <person name="Bennett J.W."/>
            <person name="Bowyer P."/>
            <person name="Chen D."/>
            <person name="Collins M."/>
            <person name="Coulsen R."/>
            <person name="Davies R."/>
            <person name="Dyer P.S."/>
            <person name="Farman M.L."/>
            <person name="Fedorova N."/>
            <person name="Fedorova N.D."/>
            <person name="Feldblyum T.V."/>
            <person name="Fischer R."/>
            <person name="Fosker N."/>
            <person name="Fraser A."/>
            <person name="Garcia J.L."/>
            <person name="Garcia M.J."/>
            <person name="Goble A."/>
            <person name="Goldman G.H."/>
            <person name="Gomi K."/>
            <person name="Griffith-Jones S."/>
            <person name="Gwilliam R."/>
            <person name="Haas B.J."/>
            <person name="Haas H."/>
            <person name="Harris D.E."/>
            <person name="Horiuchi H."/>
            <person name="Huang J."/>
            <person name="Humphray S."/>
            <person name="Jimenez J."/>
            <person name="Keller N."/>
            <person name="Khouri H."/>
            <person name="Kitamoto K."/>
            <person name="Kobayashi T."/>
            <person name="Konzack S."/>
            <person name="Kulkarni R."/>
            <person name="Kumagai T."/>
            <person name="Lafton A."/>
            <person name="Latge J.-P."/>
            <person name="Li W."/>
            <person name="Lord A."/>
            <person name="Lu C."/>
            <person name="Majoros W.H."/>
            <person name="May G.S."/>
            <person name="Miller B.L."/>
            <person name="Mohamoud Y."/>
            <person name="Molina M."/>
            <person name="Monod M."/>
            <person name="Mouyna I."/>
            <person name="Mulligan S."/>
            <person name="Murphy L.D."/>
            <person name="O'Neil S."/>
            <person name="Paulsen I."/>
            <person name="Penalva M.A."/>
            <person name="Pertea M."/>
            <person name="Price C."/>
            <person name="Pritchard B.L."/>
            <person name="Quail M.A."/>
            <person name="Rabbinowitsch E."/>
            <person name="Rawlins N."/>
            <person name="Rajandream M.A."/>
            <person name="Reichard U."/>
            <person name="Renauld H."/>
            <person name="Robson G.D."/>
            <person name="Rodriguez de Cordoba S."/>
            <person name="Rodriguez-Pena J.M."/>
            <person name="Ronning C.M."/>
            <person name="Rutter S."/>
            <person name="Salzberg S.L."/>
            <person name="Sanchez M."/>
            <person name="Sanchez-Ferrero J.C."/>
            <person name="Saunders D."/>
            <person name="Seeger K."/>
            <person name="Squares R."/>
            <person name="Squares S."/>
            <person name="Takeuchi M."/>
            <person name="Tekaia F."/>
            <person name="Turner G."/>
            <person name="Vazquez de Aldana C.R."/>
            <person name="Weidman J."/>
            <person name="White O."/>
            <person name="Woodward J.R."/>
            <person name="Yu J.-H."/>
            <person name="Fraser C.M."/>
            <person name="Galagan J.E."/>
            <person name="Asai K."/>
            <person name="Machida M."/>
            <person name="Hall N."/>
            <person name="Barrell B.G."/>
            <person name="Denning D.W."/>
        </authorList>
    </citation>
    <scope>NUCLEOTIDE SEQUENCE [LARGE SCALE GENOMIC DNA]</scope>
    <source>
        <strain>ATCC MYA-4609 / CBS 101355 / FGSC A1100 / Af293</strain>
    </source>
</reference>
<reference evidence="7" key="2">
    <citation type="journal article" date="2022" name="Acta Crystallogr. D Struct. Biol.">
        <title>Structural insights into the antifungal drug target guanosine monophosphate synthase from Aspergillus fumigatus.</title>
        <authorList>
            <person name="Nguyen S."/>
            <person name="Jovcevski B."/>
            <person name="Pukala T.L."/>
            <person name="Bruning J.B."/>
        </authorList>
    </citation>
    <scope>X-RAY CRYSTALLOGRAPHY (2.30 ANGSTROMS)</scope>
    <scope>FUNCTION</scope>
    <scope>CATALYTIC ACTIVITY</scope>
    <scope>COFACTOR</scope>
    <scope>ACTIVITY REGULATION</scope>
    <scope>BIOPHYSICOCHEMICAL PROPERTIES</scope>
    <scope>PATHWAY</scope>
    <scope>SUBUNIT</scope>
</reference>
<feature type="chain" id="PRO_0000286144" description="GMP synthase [glutamine-hydrolyzing]">
    <location>
        <begin position="1"/>
        <end position="557"/>
    </location>
</feature>
<feature type="domain" description="Glutamine amidotransferase type-1" evidence="3">
    <location>
        <begin position="13"/>
        <end position="209"/>
    </location>
</feature>
<feature type="domain" description="GMPS ATP-PPase" evidence="4">
    <location>
        <begin position="210"/>
        <end position="414"/>
    </location>
</feature>
<feature type="active site" description="Nucleophile" evidence="3">
    <location>
        <position position="89"/>
    </location>
</feature>
<feature type="active site" evidence="3">
    <location>
        <position position="183"/>
    </location>
</feature>
<feature type="active site" evidence="3">
    <location>
        <position position="185"/>
    </location>
</feature>
<feature type="binding site" evidence="4">
    <location>
        <begin position="238"/>
        <end position="244"/>
    </location>
    <ligand>
        <name>ATP</name>
        <dbReference type="ChEBI" id="CHEBI:30616"/>
    </ligand>
</feature>
<feature type="binding site" evidence="1">
    <location>
        <position position="311"/>
    </location>
    <ligand>
        <name>XMP</name>
        <dbReference type="ChEBI" id="CHEBI:57464"/>
    </ligand>
</feature>
<feature type="binding site" evidence="1">
    <location>
        <position position="476"/>
    </location>
    <ligand>
        <name>XMP</name>
        <dbReference type="ChEBI" id="CHEBI:57464"/>
    </ligand>
</feature>
<feature type="binding site" evidence="1">
    <location>
        <position position="549"/>
    </location>
    <ligand>
        <name>XMP</name>
        <dbReference type="ChEBI" id="CHEBI:57464"/>
    </ligand>
</feature>
<feature type="binding site" evidence="1">
    <location>
        <position position="555"/>
    </location>
    <ligand>
        <name>XMP</name>
        <dbReference type="ChEBI" id="CHEBI:57464"/>
    </ligand>
</feature>
<feature type="helix" evidence="8">
    <location>
        <begin position="7"/>
        <end position="10"/>
    </location>
</feature>
<feature type="strand" evidence="8">
    <location>
        <begin position="13"/>
        <end position="18"/>
    </location>
</feature>
<feature type="helix" evidence="8">
    <location>
        <begin position="24"/>
        <end position="33"/>
    </location>
</feature>
<feature type="strand" evidence="8">
    <location>
        <begin position="37"/>
        <end position="42"/>
    </location>
</feature>
<feature type="helix" evidence="8">
    <location>
        <begin position="47"/>
        <end position="49"/>
    </location>
</feature>
<feature type="strand" evidence="8">
    <location>
        <begin position="55"/>
        <end position="59"/>
    </location>
</feature>
<feature type="helix" evidence="8">
    <location>
        <begin position="76"/>
        <end position="80"/>
    </location>
</feature>
<feature type="strand" evidence="8">
    <location>
        <begin position="81"/>
        <end position="83"/>
    </location>
</feature>
<feature type="strand" evidence="8">
    <location>
        <begin position="85"/>
        <end position="88"/>
    </location>
</feature>
<feature type="helix" evidence="8">
    <location>
        <begin position="90"/>
        <end position="98"/>
    </location>
</feature>
<feature type="strand" evidence="8">
    <location>
        <begin position="112"/>
        <end position="119"/>
    </location>
</feature>
<feature type="helix" evidence="8">
    <location>
        <begin position="130"/>
        <end position="132"/>
    </location>
</feature>
<feature type="strand" evidence="8">
    <location>
        <begin position="139"/>
        <end position="144"/>
    </location>
</feature>
<feature type="helix" evidence="8">
    <location>
        <begin position="145"/>
        <end position="147"/>
    </location>
</feature>
<feature type="strand" evidence="8">
    <location>
        <begin position="149"/>
        <end position="151"/>
    </location>
</feature>
<feature type="strand" evidence="8">
    <location>
        <begin position="156"/>
        <end position="161"/>
    </location>
</feature>
<feature type="strand" evidence="8">
    <location>
        <begin position="168"/>
        <end position="182"/>
    </location>
</feature>
<feature type="helix" evidence="8">
    <location>
        <begin position="192"/>
        <end position="200"/>
    </location>
</feature>
<feature type="turn" evidence="8">
    <location>
        <begin position="201"/>
        <end position="204"/>
    </location>
</feature>
<feature type="helix" evidence="8">
    <location>
        <begin position="212"/>
        <end position="227"/>
    </location>
</feature>
<feature type="strand" evidence="8">
    <location>
        <begin position="232"/>
        <end position="236"/>
    </location>
</feature>
<feature type="helix" evidence="8">
    <location>
        <begin position="241"/>
        <end position="254"/>
    </location>
</feature>
<feature type="helix" evidence="8">
    <location>
        <begin position="255"/>
        <end position="257"/>
    </location>
</feature>
<feature type="strand" evidence="8">
    <location>
        <begin position="258"/>
        <end position="264"/>
    </location>
</feature>
<feature type="helix" evidence="8">
    <location>
        <begin position="272"/>
        <end position="281"/>
    </location>
</feature>
<feature type="strand" evidence="8">
    <location>
        <begin position="288"/>
        <end position="292"/>
    </location>
</feature>
<feature type="helix" evidence="8">
    <location>
        <begin position="294"/>
        <end position="300"/>
    </location>
</feature>
<feature type="turn" evidence="8">
    <location>
        <begin position="301"/>
        <end position="303"/>
    </location>
</feature>
<feature type="helix" evidence="8">
    <location>
        <begin position="307"/>
        <end position="330"/>
    </location>
</feature>
<feature type="strand" evidence="8">
    <location>
        <begin position="333"/>
        <end position="335"/>
    </location>
</feature>
<feature type="strand" evidence="8">
    <location>
        <begin position="340"/>
        <end position="344"/>
    </location>
</feature>
<feature type="helix" evidence="8">
    <location>
        <begin position="349"/>
        <end position="356"/>
    </location>
</feature>
<feature type="helix" evidence="8">
    <location>
        <begin position="373"/>
        <end position="379"/>
    </location>
</feature>
<feature type="turn" evidence="8">
    <location>
        <begin position="380"/>
        <end position="382"/>
    </location>
</feature>
<feature type="strand" evidence="8">
    <location>
        <begin position="385"/>
        <end position="387"/>
    </location>
</feature>
<feature type="turn" evidence="8">
    <location>
        <begin position="389"/>
        <end position="392"/>
    </location>
</feature>
<feature type="helix" evidence="8">
    <location>
        <begin position="395"/>
        <end position="404"/>
    </location>
</feature>
<feature type="turn" evidence="8">
    <location>
        <begin position="409"/>
        <end position="412"/>
    </location>
</feature>
<feature type="helix" evidence="8">
    <location>
        <begin position="421"/>
        <end position="425"/>
    </location>
</feature>
<feature type="strand" evidence="8">
    <location>
        <begin position="426"/>
        <end position="429"/>
    </location>
</feature>
<feature type="helix" evidence="8">
    <location>
        <begin position="432"/>
        <end position="451"/>
    </location>
</feature>
<feature type="strand" evidence="8">
    <location>
        <begin position="459"/>
        <end position="474"/>
    </location>
</feature>
<feature type="strand" evidence="8">
    <location>
        <begin position="477"/>
        <end position="493"/>
    </location>
</feature>
<feature type="strand" evidence="8">
    <location>
        <begin position="515"/>
        <end position="517"/>
    </location>
</feature>
<feature type="helix" evidence="8">
    <location>
        <begin position="522"/>
        <end position="535"/>
    </location>
</feature>
<feature type="strand" evidence="8">
    <location>
        <begin position="539"/>
        <end position="544"/>
    </location>
</feature>
<feature type="turn" evidence="8">
    <location>
        <begin position="549"/>
        <end position="551"/>
    </location>
</feature>
<keyword id="KW-0002">3D-structure</keyword>
<keyword id="KW-0067">ATP-binding</keyword>
<keyword id="KW-0963">Cytoplasm</keyword>
<keyword id="KW-0315">Glutamine amidotransferase</keyword>
<keyword id="KW-0332">GMP biosynthesis</keyword>
<keyword id="KW-0436">Ligase</keyword>
<keyword id="KW-0460">Magnesium</keyword>
<keyword id="KW-0547">Nucleotide-binding</keyword>
<keyword id="KW-0658">Purine biosynthesis</keyword>
<keyword id="KW-1185">Reference proteome</keyword>